<organism>
    <name type="scientific">Alcanivorax borkumensis (strain ATCC 700651 / DSM 11573 / NCIMB 13689 / SK2)</name>
    <dbReference type="NCBI Taxonomy" id="393595"/>
    <lineage>
        <taxon>Bacteria</taxon>
        <taxon>Pseudomonadati</taxon>
        <taxon>Pseudomonadota</taxon>
        <taxon>Gammaproteobacteria</taxon>
        <taxon>Oceanospirillales</taxon>
        <taxon>Alcanivoracaceae</taxon>
        <taxon>Alcanivorax</taxon>
    </lineage>
</organism>
<evidence type="ECO:0000255" key="1">
    <source>
        <dbReference type="HAMAP-Rule" id="MF_00111"/>
    </source>
</evidence>
<gene>
    <name evidence="1" type="primary">murA</name>
    <name type="ordered locus">ABO_0560</name>
</gene>
<feature type="chain" id="PRO_1000023016" description="UDP-N-acetylglucosamine 1-carboxyvinyltransferase">
    <location>
        <begin position="1"/>
        <end position="420"/>
    </location>
</feature>
<feature type="active site" description="Proton donor" evidence="1">
    <location>
        <position position="117"/>
    </location>
</feature>
<feature type="binding site" evidence="1">
    <location>
        <begin position="22"/>
        <end position="23"/>
    </location>
    <ligand>
        <name>phosphoenolpyruvate</name>
        <dbReference type="ChEBI" id="CHEBI:58702"/>
    </ligand>
</feature>
<feature type="binding site" evidence="1">
    <location>
        <position position="93"/>
    </location>
    <ligand>
        <name>UDP-N-acetyl-alpha-D-glucosamine</name>
        <dbReference type="ChEBI" id="CHEBI:57705"/>
    </ligand>
</feature>
<feature type="binding site" evidence="1">
    <location>
        <position position="307"/>
    </location>
    <ligand>
        <name>UDP-N-acetyl-alpha-D-glucosamine</name>
        <dbReference type="ChEBI" id="CHEBI:57705"/>
    </ligand>
</feature>
<feature type="binding site" evidence="1">
    <location>
        <position position="329"/>
    </location>
    <ligand>
        <name>UDP-N-acetyl-alpha-D-glucosamine</name>
        <dbReference type="ChEBI" id="CHEBI:57705"/>
    </ligand>
</feature>
<feature type="modified residue" description="2-(S-cysteinyl)pyruvic acid O-phosphothioketal" evidence="1">
    <location>
        <position position="117"/>
    </location>
</feature>
<comment type="function">
    <text evidence="1">Cell wall formation. Adds enolpyruvyl to UDP-N-acetylglucosamine.</text>
</comment>
<comment type="catalytic activity">
    <reaction evidence="1">
        <text>phosphoenolpyruvate + UDP-N-acetyl-alpha-D-glucosamine = UDP-N-acetyl-3-O-(1-carboxyvinyl)-alpha-D-glucosamine + phosphate</text>
        <dbReference type="Rhea" id="RHEA:18681"/>
        <dbReference type="ChEBI" id="CHEBI:43474"/>
        <dbReference type="ChEBI" id="CHEBI:57705"/>
        <dbReference type="ChEBI" id="CHEBI:58702"/>
        <dbReference type="ChEBI" id="CHEBI:68483"/>
        <dbReference type="EC" id="2.5.1.7"/>
    </reaction>
</comment>
<comment type="pathway">
    <text evidence="1">Cell wall biogenesis; peptidoglycan biosynthesis.</text>
</comment>
<comment type="subcellular location">
    <subcellularLocation>
        <location evidence="1">Cytoplasm</location>
    </subcellularLocation>
</comment>
<comment type="similarity">
    <text evidence="1">Belongs to the EPSP synthase family. MurA subfamily.</text>
</comment>
<sequence length="420" mass="44690">MDKLIITGGQRLDGDIRISGAKNAALPILAATLLADEPVTVGNLPHLQDVTTLIELLGRMGVHVVIDDRMNVEVNATTIKELTAPYELVKTMRASILVLGPMVAHFGKASVSLPGGCAIGSRPVDIHLRGLEAMGADIEVTNGYVNASVDGRLKGARIVMDVVTVTGTENLMMAAALAEGTTYLENAAREPEVVDLADFINAMGGKISGAGTDTITIEGVERLTGCHHQVIADRIETGTYLIAAAITGGRIKTKDTVPGTLDAVLQKLEEAGAKITTGDDWIELDMQGRRPKAVSLRTAPYPAMPTDMQAQFMALNLVAEGTGTIVETIFENRFMHVQEMNRMGADIEVQGNTAICRGVEQLTGAPVMATDLRASASLVIAALAASGETTVDRIYHIDRGYECIEEKLQSLGAIIRRVPR</sequence>
<dbReference type="EC" id="2.5.1.7" evidence="1"/>
<dbReference type="EMBL" id="AM286690">
    <property type="protein sequence ID" value="CAL16008.1"/>
    <property type="molecule type" value="Genomic_DNA"/>
</dbReference>
<dbReference type="RefSeq" id="WP_011587846.1">
    <property type="nucleotide sequence ID" value="NC_008260.1"/>
</dbReference>
<dbReference type="SMR" id="Q0VS40"/>
<dbReference type="STRING" id="393595.ABO_0560"/>
<dbReference type="KEGG" id="abo:ABO_0560"/>
<dbReference type="eggNOG" id="COG0766">
    <property type="taxonomic scope" value="Bacteria"/>
</dbReference>
<dbReference type="HOGENOM" id="CLU_027387_0_0_6"/>
<dbReference type="OrthoDB" id="9803760at2"/>
<dbReference type="UniPathway" id="UPA00219"/>
<dbReference type="Proteomes" id="UP000008871">
    <property type="component" value="Chromosome"/>
</dbReference>
<dbReference type="GO" id="GO:0005737">
    <property type="term" value="C:cytoplasm"/>
    <property type="evidence" value="ECO:0007669"/>
    <property type="project" value="UniProtKB-SubCell"/>
</dbReference>
<dbReference type="GO" id="GO:0008760">
    <property type="term" value="F:UDP-N-acetylglucosamine 1-carboxyvinyltransferase activity"/>
    <property type="evidence" value="ECO:0007669"/>
    <property type="project" value="UniProtKB-UniRule"/>
</dbReference>
<dbReference type="GO" id="GO:0051301">
    <property type="term" value="P:cell division"/>
    <property type="evidence" value="ECO:0007669"/>
    <property type="project" value="UniProtKB-KW"/>
</dbReference>
<dbReference type="GO" id="GO:0071555">
    <property type="term" value="P:cell wall organization"/>
    <property type="evidence" value="ECO:0007669"/>
    <property type="project" value="UniProtKB-KW"/>
</dbReference>
<dbReference type="GO" id="GO:0009252">
    <property type="term" value="P:peptidoglycan biosynthetic process"/>
    <property type="evidence" value="ECO:0007669"/>
    <property type="project" value="UniProtKB-UniRule"/>
</dbReference>
<dbReference type="GO" id="GO:0008360">
    <property type="term" value="P:regulation of cell shape"/>
    <property type="evidence" value="ECO:0007669"/>
    <property type="project" value="UniProtKB-KW"/>
</dbReference>
<dbReference type="GO" id="GO:0019277">
    <property type="term" value="P:UDP-N-acetylgalactosamine biosynthetic process"/>
    <property type="evidence" value="ECO:0007669"/>
    <property type="project" value="InterPro"/>
</dbReference>
<dbReference type="CDD" id="cd01555">
    <property type="entry name" value="UdpNAET"/>
    <property type="match status" value="1"/>
</dbReference>
<dbReference type="FunFam" id="3.65.10.10:FF:000002">
    <property type="entry name" value="UDP-N-acetylglucosamine 1-carboxyvinyltransferase"/>
    <property type="match status" value="1"/>
</dbReference>
<dbReference type="Gene3D" id="3.65.10.10">
    <property type="entry name" value="Enolpyruvate transferase domain"/>
    <property type="match status" value="2"/>
</dbReference>
<dbReference type="HAMAP" id="MF_00111">
    <property type="entry name" value="MurA"/>
    <property type="match status" value="1"/>
</dbReference>
<dbReference type="InterPro" id="IPR001986">
    <property type="entry name" value="Enolpyruvate_Tfrase_dom"/>
</dbReference>
<dbReference type="InterPro" id="IPR036968">
    <property type="entry name" value="Enolpyruvate_Tfrase_sf"/>
</dbReference>
<dbReference type="InterPro" id="IPR050068">
    <property type="entry name" value="MurA_subfamily"/>
</dbReference>
<dbReference type="InterPro" id="IPR013792">
    <property type="entry name" value="RNA3'P_cycl/enolpyr_Trfase_a/b"/>
</dbReference>
<dbReference type="InterPro" id="IPR005750">
    <property type="entry name" value="UDP_GlcNAc_COvinyl_MurA"/>
</dbReference>
<dbReference type="NCBIfam" id="TIGR01072">
    <property type="entry name" value="murA"/>
    <property type="match status" value="1"/>
</dbReference>
<dbReference type="NCBIfam" id="NF006873">
    <property type="entry name" value="PRK09369.1"/>
    <property type="match status" value="1"/>
</dbReference>
<dbReference type="PANTHER" id="PTHR43783">
    <property type="entry name" value="UDP-N-ACETYLGLUCOSAMINE 1-CARBOXYVINYLTRANSFERASE"/>
    <property type="match status" value="1"/>
</dbReference>
<dbReference type="PANTHER" id="PTHR43783:SF1">
    <property type="entry name" value="UDP-N-ACETYLGLUCOSAMINE 1-CARBOXYVINYLTRANSFERASE"/>
    <property type="match status" value="1"/>
</dbReference>
<dbReference type="Pfam" id="PF00275">
    <property type="entry name" value="EPSP_synthase"/>
    <property type="match status" value="1"/>
</dbReference>
<dbReference type="SUPFAM" id="SSF55205">
    <property type="entry name" value="EPT/RTPC-like"/>
    <property type="match status" value="1"/>
</dbReference>
<keyword id="KW-0131">Cell cycle</keyword>
<keyword id="KW-0132">Cell division</keyword>
<keyword id="KW-0133">Cell shape</keyword>
<keyword id="KW-0961">Cell wall biogenesis/degradation</keyword>
<keyword id="KW-0963">Cytoplasm</keyword>
<keyword id="KW-0573">Peptidoglycan synthesis</keyword>
<keyword id="KW-0670">Pyruvate</keyword>
<keyword id="KW-1185">Reference proteome</keyword>
<keyword id="KW-0808">Transferase</keyword>
<proteinExistence type="inferred from homology"/>
<protein>
    <recommendedName>
        <fullName evidence="1">UDP-N-acetylglucosamine 1-carboxyvinyltransferase</fullName>
        <ecNumber evidence="1">2.5.1.7</ecNumber>
    </recommendedName>
    <alternativeName>
        <fullName evidence="1">Enoylpyruvate transferase</fullName>
    </alternativeName>
    <alternativeName>
        <fullName evidence="1">UDP-N-acetylglucosamine enolpyruvyl transferase</fullName>
        <shortName evidence="1">EPT</shortName>
    </alternativeName>
</protein>
<name>MURA_ALCBS</name>
<accession>Q0VS40</accession>
<reference key="1">
    <citation type="journal article" date="2006" name="Nat. Biotechnol.">
        <title>Genome sequence of the ubiquitous hydrocarbon-degrading marine bacterium Alcanivorax borkumensis.</title>
        <authorList>
            <person name="Schneiker S."/>
            <person name="Martins dos Santos V.A.P."/>
            <person name="Bartels D."/>
            <person name="Bekel T."/>
            <person name="Brecht M."/>
            <person name="Buhrmester J."/>
            <person name="Chernikova T.N."/>
            <person name="Denaro R."/>
            <person name="Ferrer M."/>
            <person name="Gertler C."/>
            <person name="Goesmann A."/>
            <person name="Golyshina O.V."/>
            <person name="Kaminski F."/>
            <person name="Khachane A.N."/>
            <person name="Lang S."/>
            <person name="Linke B."/>
            <person name="McHardy A.C."/>
            <person name="Meyer F."/>
            <person name="Nechitaylo T."/>
            <person name="Puehler A."/>
            <person name="Regenhardt D."/>
            <person name="Rupp O."/>
            <person name="Sabirova J.S."/>
            <person name="Selbitschka W."/>
            <person name="Yakimov M.M."/>
            <person name="Timmis K.N."/>
            <person name="Vorhoelter F.-J."/>
            <person name="Weidner S."/>
            <person name="Kaiser O."/>
            <person name="Golyshin P.N."/>
        </authorList>
    </citation>
    <scope>NUCLEOTIDE SEQUENCE [LARGE SCALE GENOMIC DNA]</scope>
    <source>
        <strain>ATCC 700651 / DSM 11573 / NCIMB 13689 / SK2</strain>
    </source>
</reference>